<keyword id="KW-0249">Electron transport</keyword>
<keyword id="KW-0274">FAD</keyword>
<keyword id="KW-0285">Flavoprotein</keyword>
<keyword id="KW-0813">Transport</keyword>
<accession>P53578</accession>
<accession>Q9R5W1</accession>
<organism>
    <name type="scientific">Clostridium saccharobutylicum</name>
    <dbReference type="NCBI Taxonomy" id="169679"/>
    <lineage>
        <taxon>Bacteria</taxon>
        <taxon>Bacillati</taxon>
        <taxon>Bacillota</taxon>
        <taxon>Clostridia</taxon>
        <taxon>Eubacteriales</taxon>
        <taxon>Clostridiaceae</taxon>
        <taxon>Clostridium</taxon>
    </lineage>
</organism>
<name>FIXB_CLOSA</name>
<proteinExistence type="inferred from homology"/>
<sequence>MNIADYKGVWVFAEQREGELQKVSLELLGEGRRVADKLGVKLTALLLGSNVEGIKDLAEHGADEVLVADNKDLQHYTTDAYTKVICDLANERKPGILFVGATFIGRDLGPRVAARLNTGLTADCTSIDVEVENGDLLATRPAFGGNLMATIACPEHRPQMATVRPGVFEKVNTDGANCKVEKVEVKLTNNDLRTKVLEIIKSKKDIVDISEAKIIVAGGRGVGSKENFELLGELAKVLGGTVAGSRAAVEKGWIENAYQVGQTGKTVKPSIYIACGISGAIQHVAGMQDSDMIIAINKDETAPIMKVADYGIVGDVKNVLPELIAQAKEIISAE</sequence>
<dbReference type="EMBL" id="M91817">
    <property type="protein sequence ID" value="AAA23237.1"/>
    <property type="molecule type" value="Genomic_DNA"/>
</dbReference>
<dbReference type="SMR" id="P53578"/>
<dbReference type="STRING" id="169679.CSACC_03530"/>
<dbReference type="GO" id="GO:0009055">
    <property type="term" value="F:electron transfer activity"/>
    <property type="evidence" value="ECO:0007669"/>
    <property type="project" value="InterPro"/>
</dbReference>
<dbReference type="GO" id="GO:0050660">
    <property type="term" value="F:flavin adenine dinucleotide binding"/>
    <property type="evidence" value="ECO:0007669"/>
    <property type="project" value="InterPro"/>
</dbReference>
<dbReference type="GO" id="GO:0033539">
    <property type="term" value="P:fatty acid beta-oxidation using acyl-CoA dehydrogenase"/>
    <property type="evidence" value="ECO:0007669"/>
    <property type="project" value="TreeGrafter"/>
</dbReference>
<dbReference type="CDD" id="cd01715">
    <property type="entry name" value="ETF_alpha"/>
    <property type="match status" value="1"/>
</dbReference>
<dbReference type="FunFam" id="3.40.50.1220:FF:000001">
    <property type="entry name" value="Electron transfer flavoprotein, alpha subunit"/>
    <property type="match status" value="1"/>
</dbReference>
<dbReference type="Gene3D" id="3.40.50.620">
    <property type="entry name" value="HUPs"/>
    <property type="match status" value="1"/>
</dbReference>
<dbReference type="Gene3D" id="3.40.50.1220">
    <property type="entry name" value="TPP-binding domain"/>
    <property type="match status" value="1"/>
</dbReference>
<dbReference type="InterPro" id="IPR029035">
    <property type="entry name" value="DHS-like_NAD/FAD-binding_dom"/>
</dbReference>
<dbReference type="InterPro" id="IPR014730">
    <property type="entry name" value="ETF_a/b_N"/>
</dbReference>
<dbReference type="InterPro" id="IPR001308">
    <property type="entry name" value="ETF_a/FixB"/>
</dbReference>
<dbReference type="InterPro" id="IPR033947">
    <property type="entry name" value="ETF_alpha_N"/>
</dbReference>
<dbReference type="InterPro" id="IPR014731">
    <property type="entry name" value="ETF_asu_C"/>
</dbReference>
<dbReference type="InterPro" id="IPR018206">
    <property type="entry name" value="ETF_asu_C_CS"/>
</dbReference>
<dbReference type="InterPro" id="IPR014729">
    <property type="entry name" value="Rossmann-like_a/b/a_fold"/>
</dbReference>
<dbReference type="PANTHER" id="PTHR43153">
    <property type="entry name" value="ELECTRON TRANSFER FLAVOPROTEIN ALPHA"/>
    <property type="match status" value="1"/>
</dbReference>
<dbReference type="PANTHER" id="PTHR43153:SF1">
    <property type="entry name" value="ELECTRON TRANSFER FLAVOPROTEIN SUBUNIT ALPHA, MITOCHONDRIAL"/>
    <property type="match status" value="1"/>
</dbReference>
<dbReference type="Pfam" id="PF01012">
    <property type="entry name" value="ETF"/>
    <property type="match status" value="1"/>
</dbReference>
<dbReference type="Pfam" id="PF00766">
    <property type="entry name" value="ETF_alpha"/>
    <property type="match status" value="1"/>
</dbReference>
<dbReference type="PIRSF" id="PIRSF000089">
    <property type="entry name" value="Electra_flavoP_a"/>
    <property type="match status" value="1"/>
</dbReference>
<dbReference type="SMART" id="SM00893">
    <property type="entry name" value="ETF"/>
    <property type="match status" value="1"/>
</dbReference>
<dbReference type="SUPFAM" id="SSF52402">
    <property type="entry name" value="Adenine nucleotide alpha hydrolases-like"/>
    <property type="match status" value="1"/>
</dbReference>
<dbReference type="SUPFAM" id="SSF52467">
    <property type="entry name" value="DHS-like NAD/FAD-binding domain"/>
    <property type="match status" value="1"/>
</dbReference>
<dbReference type="PROSITE" id="PS00696">
    <property type="entry name" value="ETF_ALPHA"/>
    <property type="match status" value="1"/>
</dbReference>
<gene>
    <name type="primary">fixB</name>
</gene>
<comment type="function">
    <text>May play a role in a redox process.</text>
</comment>
<comment type="subunit">
    <text evidence="2">FixA and FixB form a heterodimer.</text>
</comment>
<comment type="similarity">
    <text evidence="2">Belongs to the ETF alpha-subunit/FixB family.</text>
</comment>
<comment type="caution">
    <text evidence="2">Was originally thought to originate from C.acetobutylicum.</text>
</comment>
<evidence type="ECO:0000255" key="1"/>
<evidence type="ECO:0000305" key="2"/>
<protein>
    <recommendedName>
        <fullName>Protein FixB</fullName>
    </recommendedName>
</protein>
<feature type="chain" id="PRO_0000167860" description="Protein FixB">
    <location>
        <begin position="1"/>
        <end position="334"/>
    </location>
</feature>
<feature type="binding site" evidence="1">
    <location>
        <begin position="271"/>
        <end position="299"/>
    </location>
    <ligand>
        <name>FAD</name>
        <dbReference type="ChEBI" id="CHEBI:57692"/>
    </ligand>
</feature>
<feature type="sequence conflict" description="In Ref. 2." evidence="2" ref="2">
    <original>Q</original>
    <variation>R</variation>
    <location>
        <position position="15"/>
    </location>
</feature>
<reference key="1">
    <citation type="submission" date="1992-04" db="EMBL/GenBank/DDBJ databases">
        <title>Independent transcription of the linked Clostridium acetobutylicum fixB, a-hbd and adh1 genes in C. acetobutylicum P262 and Escherichia coli.</title>
        <authorList>
            <person name="Lin F.-P."/>
            <person name="Reid S.J."/>
            <person name="Woods D.R."/>
        </authorList>
    </citation>
    <scope>NUCLEOTIDE SEQUENCE [GENOMIC DNA]</scope>
    <source>
        <strain>ATCC BAA-117 / DSM 13864 / NCP 262</strain>
    </source>
</reference>
<reference key="2">
    <citation type="journal article" date="1995" name="FEMS Microbiol. Lett.">
        <title>Structure and transcription of genes within the beta-hbd-adh1 region of Clostridium acetobutylicum P262.</title>
        <authorList>
            <person name="Youngleson J.S."/>
            <person name="Lin F.-P."/>
            <person name="Reid S.J."/>
            <person name="Woods D.R."/>
        </authorList>
    </citation>
    <scope>NUCLEOTIDE SEQUENCE [GENOMIC DNA]</scope>
    <source>
        <strain>ATCC BAA-117 / DSM 13864 / NCP 262</strain>
    </source>
</reference>